<protein>
    <recommendedName>
        <fullName evidence="2">Intracellular hyaluronan-binding protein 4</fullName>
        <shortName evidence="2">IHABP4</shortName>
    </recommendedName>
</protein>
<name>HABP4_CHICK</name>
<organism>
    <name type="scientific">Gallus gallus</name>
    <name type="common">Chicken</name>
    <dbReference type="NCBI Taxonomy" id="9031"/>
    <lineage>
        <taxon>Eukaryota</taxon>
        <taxon>Metazoa</taxon>
        <taxon>Chordata</taxon>
        <taxon>Craniata</taxon>
        <taxon>Vertebrata</taxon>
        <taxon>Euteleostomi</taxon>
        <taxon>Archelosauria</taxon>
        <taxon>Archosauria</taxon>
        <taxon>Dinosauria</taxon>
        <taxon>Saurischia</taxon>
        <taxon>Theropoda</taxon>
        <taxon>Coelurosauria</taxon>
        <taxon>Aves</taxon>
        <taxon>Neognathae</taxon>
        <taxon>Galloanserae</taxon>
        <taxon>Galliformes</taxon>
        <taxon>Phasianidae</taxon>
        <taxon>Phasianinae</taxon>
        <taxon>Gallus</taxon>
    </lineage>
</organism>
<reference evidence="6 7" key="1">
    <citation type="journal article" date="2000" name="J. Biol. Chem.">
        <title>Molecular characterization of a novel intracellular hyaluronan-binding protein.</title>
        <authorList>
            <person name="Huang L."/>
            <person name="Grammatikakis N."/>
            <person name="Yoneda M."/>
            <person name="Banerjee S.D."/>
            <person name="Toole B.P."/>
        </authorList>
    </citation>
    <scope>NUCLEOTIDE SEQUENCE [MRNA]</scope>
    <scope>SUBCELLULAR LOCATION</scope>
</reference>
<accession>Q9I9R0</accession>
<keyword id="KW-0963">Cytoplasm</keyword>
<keyword id="KW-0507">mRNA processing</keyword>
<keyword id="KW-0508">mRNA splicing</keyword>
<keyword id="KW-0539">Nucleus</keyword>
<keyword id="KW-1185">Reference proteome</keyword>
<keyword id="KW-0810">Translation regulation</keyword>
<dbReference type="EMBL" id="AF227683">
    <property type="protein sequence ID" value="AAF36965.1"/>
    <property type="molecule type" value="mRNA"/>
</dbReference>
<dbReference type="RefSeq" id="NP_990036.1">
    <property type="nucleotide sequence ID" value="NM_204705.2"/>
</dbReference>
<dbReference type="FunCoup" id="Q9I9R0">
    <property type="interactions" value="214"/>
</dbReference>
<dbReference type="STRING" id="9031.ENSGALP00000059387"/>
<dbReference type="PaxDb" id="9031-ENSGALP00000020585"/>
<dbReference type="GeneID" id="395444"/>
<dbReference type="KEGG" id="gga:395444"/>
<dbReference type="CTD" id="22927"/>
<dbReference type="VEuPathDB" id="HostDB:geneid_395444"/>
<dbReference type="eggNOG" id="KOG2945">
    <property type="taxonomic scope" value="Eukaryota"/>
</dbReference>
<dbReference type="HOGENOM" id="CLU_037366_0_0_1"/>
<dbReference type="InParanoid" id="Q9I9R0"/>
<dbReference type="OMA" id="EEMNGFQ"/>
<dbReference type="OrthoDB" id="6022699at2759"/>
<dbReference type="PhylomeDB" id="Q9I9R0"/>
<dbReference type="Reactome" id="R-GGA-114608">
    <property type="pathway name" value="Platelet degranulation"/>
</dbReference>
<dbReference type="PRO" id="PR:Q9I9R0"/>
<dbReference type="Proteomes" id="UP000000539">
    <property type="component" value="Chromosome Z"/>
</dbReference>
<dbReference type="Bgee" id="ENSGALG00000012628">
    <property type="expression patterns" value="Expressed in testis and 14 other cell types or tissues"/>
</dbReference>
<dbReference type="GO" id="GO:0015030">
    <property type="term" value="C:Cajal body"/>
    <property type="evidence" value="ECO:0000250"/>
    <property type="project" value="UniProtKB"/>
</dbReference>
<dbReference type="GO" id="GO:0005737">
    <property type="term" value="C:cytoplasm"/>
    <property type="evidence" value="ECO:0000250"/>
    <property type="project" value="UniProtKB"/>
</dbReference>
<dbReference type="GO" id="GO:0010494">
    <property type="term" value="C:cytoplasmic stress granule"/>
    <property type="evidence" value="ECO:0000250"/>
    <property type="project" value="UniProtKB"/>
</dbReference>
<dbReference type="GO" id="GO:0097504">
    <property type="term" value="C:Gemini of Cajal bodies"/>
    <property type="evidence" value="ECO:0000250"/>
    <property type="project" value="UniProtKB"/>
</dbReference>
<dbReference type="GO" id="GO:0016607">
    <property type="term" value="C:nuclear speck"/>
    <property type="evidence" value="ECO:0000250"/>
    <property type="project" value="UniProtKB"/>
</dbReference>
<dbReference type="GO" id="GO:0005730">
    <property type="term" value="C:nucleolus"/>
    <property type="evidence" value="ECO:0000250"/>
    <property type="project" value="UniProtKB"/>
</dbReference>
<dbReference type="GO" id="GO:0005634">
    <property type="term" value="C:nucleus"/>
    <property type="evidence" value="ECO:0000250"/>
    <property type="project" value="UniProtKB"/>
</dbReference>
<dbReference type="GO" id="GO:0016528">
    <property type="term" value="C:sarcoplasm"/>
    <property type="evidence" value="ECO:0007669"/>
    <property type="project" value="UniProtKB-SubCell"/>
</dbReference>
<dbReference type="GO" id="GO:0043022">
    <property type="term" value="F:ribosome binding"/>
    <property type="evidence" value="ECO:0000250"/>
    <property type="project" value="UniProtKB"/>
</dbReference>
<dbReference type="GO" id="GO:0003723">
    <property type="term" value="F:RNA binding"/>
    <property type="evidence" value="ECO:0000318"/>
    <property type="project" value="GO_Central"/>
</dbReference>
<dbReference type="GO" id="GO:0061770">
    <property type="term" value="F:translation elongation factor binding"/>
    <property type="evidence" value="ECO:0000250"/>
    <property type="project" value="UniProtKB"/>
</dbReference>
<dbReference type="GO" id="GO:0006397">
    <property type="term" value="P:mRNA processing"/>
    <property type="evidence" value="ECO:0007669"/>
    <property type="project" value="UniProtKB-KW"/>
</dbReference>
<dbReference type="GO" id="GO:0033120">
    <property type="term" value="P:positive regulation of RNA splicing"/>
    <property type="evidence" value="ECO:0000250"/>
    <property type="project" value="UniProtKB"/>
</dbReference>
<dbReference type="GO" id="GO:0045948">
    <property type="term" value="P:positive regulation of translational initiation"/>
    <property type="evidence" value="ECO:0000250"/>
    <property type="project" value="UniProtKB"/>
</dbReference>
<dbReference type="GO" id="GO:0141014">
    <property type="term" value="P:ribosome hibernation"/>
    <property type="evidence" value="ECO:0000250"/>
    <property type="project" value="UniProtKB"/>
</dbReference>
<dbReference type="GO" id="GO:0008380">
    <property type="term" value="P:RNA splicing"/>
    <property type="evidence" value="ECO:0007669"/>
    <property type="project" value="UniProtKB-KW"/>
</dbReference>
<dbReference type="InterPro" id="IPR039764">
    <property type="entry name" value="HABP4/SERBP1-like"/>
</dbReference>
<dbReference type="InterPro" id="IPR006861">
    <property type="entry name" value="HABP4_PAIRBP1-bd"/>
</dbReference>
<dbReference type="InterPro" id="IPR032381">
    <property type="entry name" value="IHABP4_N"/>
</dbReference>
<dbReference type="PANTHER" id="PTHR12299">
    <property type="entry name" value="HYALURONIC ACID-BINDING PROTEIN 4"/>
    <property type="match status" value="1"/>
</dbReference>
<dbReference type="PANTHER" id="PTHR12299:SF30">
    <property type="entry name" value="INTRACELLULAR HYALURONAN-BINDING PROTEIN 4"/>
    <property type="match status" value="1"/>
</dbReference>
<dbReference type="Pfam" id="PF04774">
    <property type="entry name" value="HABP4_PAI-RBP1"/>
    <property type="match status" value="1"/>
</dbReference>
<dbReference type="Pfam" id="PF16174">
    <property type="entry name" value="IHABP4_N"/>
    <property type="match status" value="1"/>
</dbReference>
<dbReference type="SMART" id="SM01233">
    <property type="entry name" value="HABP4_PAI-RBP1"/>
    <property type="match status" value="1"/>
</dbReference>
<comment type="function">
    <text evidence="3">Ribosome-binding protein that promotes ribosome hibernation, a process during which ribosomes are stabilized in an inactive state and preserved from proteasomal degradation (By similarity). Acts via its association with EEF2/eEF2 factor at the A-site of the ribosome, promoting ribosome stabilization in an inactive state compatible with storage (By similarity). Plays a key role in ribosome hibernation in the mature egg by promoting ribosome stabilization (By similarity). Ribosomes, which are produced in large quantities during oogenesis, are stored and translationally repressed in the egg and early embryo (By similarity).</text>
</comment>
<comment type="subunit">
    <text evidence="3">Associates with ribosomes; promoting ribosome stabilization (By similarity). Interacts with EEF2/eEF2; promoting ribosome stabilization (By similarity).</text>
</comment>
<comment type="subcellular location">
    <subcellularLocation>
        <location evidence="2">Nucleus</location>
    </subcellularLocation>
    <subcellularLocation>
        <location evidence="5">Cytoplasm</location>
    </subcellularLocation>
    <subcellularLocation>
        <location evidence="2">Cytoplasm</location>
        <location evidence="2">Stress granule</location>
    </subcellularLocation>
    <subcellularLocation>
        <location evidence="1">Cytoplasm</location>
        <location evidence="1">Sarcoplasm</location>
    </subcellularLocation>
    <subcellularLocation>
        <location evidence="2">Nucleus</location>
        <location evidence="2">Nuclear body</location>
    </subcellularLocation>
    <subcellularLocation>
        <location evidence="2">Nucleus</location>
        <location evidence="2">Nucleolus</location>
    </subcellularLocation>
    <subcellularLocation>
        <location evidence="2">Nucleus speckle</location>
    </subcellularLocation>
    <subcellularLocation>
        <location evidence="2">Nucleus</location>
        <location evidence="2">Cajal body</location>
    </subcellularLocation>
    <subcellularLocation>
        <location evidence="2">Nucleus</location>
        <location evidence="2">Gem</location>
    </subcellularLocation>
    <text evidence="5">Predominantly cytoplasmic.</text>
</comment>
<comment type="domain">
    <text evidence="2">The C-terminal region is necessary for nucleus and cytoplasmic localization. The N-terminal region is necessary for nucleus and nuclear bodies localization.</text>
</comment>
<comment type="similarity">
    <text evidence="6">Belongs to the SERBP1-HABP4 family.</text>
</comment>
<sequence>MMKGAMGCPVAAVMEGSFSCTVANRFYQLLDDESDPFDNLREAERCWQQRKNLSKVVARRGDPGSRGCATRRELQKQRKQLGTPAPPPQPGQKQAPKQEECGGKDNSRAEKEHKTAWRPSFMEYLSSETESQAELTAQSLFRPTAKLNYERPRGCGRGRGGMQGRGRGGGINKSFDGFDQRGKREFGRQNDNDKIEMELTAPMEATAKTAKSPGVSEGELLNKVAEGKPREEVVQEMTLDEWKNLQQQNRPKHEFNIRRPESTVPSKAVVIHKSKYSDDIQKGELEDDYHIFRRAVNDITFQLDINFGSLPRPGCGSRGARGRGRGRQMEETGPQPEAMVQIVAPNPDDPEDFPALT</sequence>
<gene>
    <name evidence="2" type="primary">HABP4</name>
</gene>
<proteinExistence type="evidence at transcript level"/>
<feature type="chain" id="PRO_0000257974" description="Intracellular hyaluronan-binding protein 4">
    <location>
        <begin position="1"/>
        <end position="357"/>
    </location>
</feature>
<feature type="region of interest" description="Disordered" evidence="4">
    <location>
        <begin position="56"/>
        <end position="116"/>
    </location>
</feature>
<feature type="region of interest" description="Disordered" evidence="4">
    <location>
        <begin position="150"/>
        <end position="186"/>
    </location>
</feature>
<feature type="region of interest" description="Disordered" evidence="4">
    <location>
        <begin position="313"/>
        <end position="357"/>
    </location>
</feature>
<feature type="compositionally biased region" description="Basic and acidic residues" evidence="4">
    <location>
        <begin position="96"/>
        <end position="115"/>
    </location>
</feature>
<feature type="compositionally biased region" description="Gly residues" evidence="4">
    <location>
        <begin position="155"/>
        <end position="171"/>
    </location>
</feature>
<feature type="compositionally biased region" description="Basic and acidic residues" evidence="4">
    <location>
        <begin position="176"/>
        <end position="186"/>
    </location>
</feature>
<feature type="compositionally biased region" description="Acidic residues" evidence="4">
    <location>
        <begin position="348"/>
        <end position="357"/>
    </location>
</feature>
<evidence type="ECO:0000250" key="1">
    <source>
        <dbReference type="UniProtKB" id="A1L1K8"/>
    </source>
</evidence>
<evidence type="ECO:0000250" key="2">
    <source>
        <dbReference type="UniProtKB" id="Q5JVS0"/>
    </source>
</evidence>
<evidence type="ECO:0000250" key="3">
    <source>
        <dbReference type="UniProtKB" id="Q5XJA5"/>
    </source>
</evidence>
<evidence type="ECO:0000256" key="4">
    <source>
        <dbReference type="SAM" id="MobiDB-lite"/>
    </source>
</evidence>
<evidence type="ECO:0000269" key="5">
    <source>
    </source>
</evidence>
<evidence type="ECO:0000305" key="6"/>
<evidence type="ECO:0000312" key="7">
    <source>
        <dbReference type="EMBL" id="AAF36965.1"/>
    </source>
</evidence>